<protein>
    <recommendedName>
        <fullName evidence="1">Nitric oxide reductase FlRd-NAD(+) reductase</fullName>
        <ecNumber evidence="1">1.18.1.-</ecNumber>
    </recommendedName>
    <alternativeName>
        <fullName evidence="1">Flavorubredoxin reductase</fullName>
        <shortName evidence="1">FlRd-reductase</shortName>
        <shortName evidence="1">FlavoRb reductase</shortName>
    </alternativeName>
</protein>
<reference key="1">
    <citation type="submission" date="2007-11" db="EMBL/GenBank/DDBJ databases">
        <authorList>
            <consortium name="The Salmonella enterica serovar Paratyphi B Genome Sequencing Project"/>
            <person name="McClelland M."/>
            <person name="Sanderson E.K."/>
            <person name="Porwollik S."/>
            <person name="Spieth J."/>
            <person name="Clifton W.S."/>
            <person name="Fulton R."/>
            <person name="Cordes M."/>
            <person name="Wollam A."/>
            <person name="Shah N."/>
            <person name="Pepin K."/>
            <person name="Bhonagiri V."/>
            <person name="Nash W."/>
            <person name="Johnson M."/>
            <person name="Thiruvilangam P."/>
            <person name="Wilson R."/>
        </authorList>
    </citation>
    <scope>NUCLEOTIDE SEQUENCE [LARGE SCALE GENOMIC DNA]</scope>
    <source>
        <strain>ATCC BAA-1250 / SPB7</strain>
    </source>
</reference>
<feature type="chain" id="PRO_1000086222" description="Nitric oxide reductase FlRd-NAD(+) reductase">
    <location>
        <begin position="1"/>
        <end position="377"/>
    </location>
</feature>
<keyword id="KW-0963">Cytoplasm</keyword>
<keyword id="KW-0274">FAD</keyword>
<keyword id="KW-0285">Flavoprotein</keyword>
<keyword id="KW-0520">NAD</keyword>
<keyword id="KW-0560">Oxidoreductase</keyword>
<dbReference type="EC" id="1.18.1.-" evidence="1"/>
<dbReference type="EMBL" id="CP000886">
    <property type="protein sequence ID" value="ABX68874.1"/>
    <property type="molecule type" value="Genomic_DNA"/>
</dbReference>
<dbReference type="RefSeq" id="WP_000086341.1">
    <property type="nucleotide sequence ID" value="NC_010102.1"/>
</dbReference>
<dbReference type="SMR" id="A9N0E0"/>
<dbReference type="KEGG" id="spq:SPAB_03533"/>
<dbReference type="PATRIC" id="fig|1016998.12.peg.3325"/>
<dbReference type="HOGENOM" id="CLU_003291_4_4_6"/>
<dbReference type="BioCyc" id="SENT1016998:SPAB_RS14390-MONOMER"/>
<dbReference type="UniPathway" id="UPA00638"/>
<dbReference type="Proteomes" id="UP000008556">
    <property type="component" value="Chromosome"/>
</dbReference>
<dbReference type="GO" id="GO:0005737">
    <property type="term" value="C:cytoplasm"/>
    <property type="evidence" value="ECO:0007669"/>
    <property type="project" value="UniProtKB-SubCell"/>
</dbReference>
<dbReference type="GO" id="GO:0016731">
    <property type="term" value="F:oxidoreductase activity, acting on iron-sulfur proteins as donors, NAD or NADP as acceptor"/>
    <property type="evidence" value="ECO:0007669"/>
    <property type="project" value="UniProtKB-UniRule"/>
</dbReference>
<dbReference type="Gene3D" id="3.30.390.120">
    <property type="match status" value="1"/>
</dbReference>
<dbReference type="Gene3D" id="3.50.50.60">
    <property type="entry name" value="FAD/NAD(P)-binding domain"/>
    <property type="match status" value="2"/>
</dbReference>
<dbReference type="HAMAP" id="MF_01313">
    <property type="entry name" value="NorW"/>
    <property type="match status" value="1"/>
</dbReference>
<dbReference type="InterPro" id="IPR050260">
    <property type="entry name" value="FAD-bd_OxRdtase"/>
</dbReference>
<dbReference type="InterPro" id="IPR036188">
    <property type="entry name" value="FAD/NAD-bd_sf"/>
</dbReference>
<dbReference type="InterPro" id="IPR023753">
    <property type="entry name" value="FAD/NAD-binding_dom"/>
</dbReference>
<dbReference type="InterPro" id="IPR023961">
    <property type="entry name" value="NO_rdtase_NorW"/>
</dbReference>
<dbReference type="InterPro" id="IPR041364">
    <property type="entry name" value="Rbx-bd"/>
</dbReference>
<dbReference type="NCBIfam" id="NF003437">
    <property type="entry name" value="PRK04965.1"/>
    <property type="match status" value="1"/>
</dbReference>
<dbReference type="PANTHER" id="PTHR43429:SF3">
    <property type="entry name" value="NITRITE REDUCTASE [NAD(P)H]"/>
    <property type="match status" value="1"/>
</dbReference>
<dbReference type="PANTHER" id="PTHR43429">
    <property type="entry name" value="PYRIDINE NUCLEOTIDE-DISULFIDE OXIDOREDUCTASE DOMAIN-CONTAINING"/>
    <property type="match status" value="1"/>
</dbReference>
<dbReference type="Pfam" id="PF07992">
    <property type="entry name" value="Pyr_redox_2"/>
    <property type="match status" value="1"/>
</dbReference>
<dbReference type="Pfam" id="PF18113">
    <property type="entry name" value="Rbx_binding"/>
    <property type="match status" value="1"/>
</dbReference>
<dbReference type="PRINTS" id="PR00368">
    <property type="entry name" value="FADPNR"/>
</dbReference>
<dbReference type="PRINTS" id="PR00411">
    <property type="entry name" value="PNDRDTASEI"/>
</dbReference>
<dbReference type="SUPFAM" id="SSF51905">
    <property type="entry name" value="FAD/NAD(P)-binding domain"/>
    <property type="match status" value="1"/>
</dbReference>
<organism>
    <name type="scientific">Salmonella paratyphi B (strain ATCC BAA-1250 / SPB7)</name>
    <dbReference type="NCBI Taxonomy" id="1016998"/>
    <lineage>
        <taxon>Bacteria</taxon>
        <taxon>Pseudomonadati</taxon>
        <taxon>Pseudomonadota</taxon>
        <taxon>Gammaproteobacteria</taxon>
        <taxon>Enterobacterales</taxon>
        <taxon>Enterobacteriaceae</taxon>
        <taxon>Salmonella</taxon>
    </lineage>
</organism>
<proteinExistence type="inferred from homology"/>
<evidence type="ECO:0000255" key="1">
    <source>
        <dbReference type="HAMAP-Rule" id="MF_01313"/>
    </source>
</evidence>
<comment type="function">
    <text evidence="1">One of at least two accessory proteins for anaerobic nitric oxide (NO) reductase. Reduces the rubredoxin moiety of NO reductase.</text>
</comment>
<comment type="catalytic activity">
    <reaction evidence="1">
        <text>2 reduced [nitric oxide reductase rubredoxin domain] + NAD(+) + H(+) = 2 oxidized [nitric oxide reductase rubredoxin domain] + NADH</text>
        <dbReference type="Rhea" id="RHEA:42960"/>
        <dbReference type="Rhea" id="RHEA-COMP:10304"/>
        <dbReference type="Rhea" id="RHEA-COMP:10305"/>
        <dbReference type="ChEBI" id="CHEBI:15378"/>
        <dbReference type="ChEBI" id="CHEBI:29033"/>
        <dbReference type="ChEBI" id="CHEBI:29034"/>
        <dbReference type="ChEBI" id="CHEBI:57540"/>
        <dbReference type="ChEBI" id="CHEBI:57945"/>
    </reaction>
</comment>
<comment type="cofactor">
    <cofactor evidence="1">
        <name>FAD</name>
        <dbReference type="ChEBI" id="CHEBI:57692"/>
    </cofactor>
</comment>
<comment type="pathway">
    <text evidence="1">Nitrogen metabolism; nitric oxide reduction.</text>
</comment>
<comment type="subcellular location">
    <subcellularLocation>
        <location evidence="1">Cytoplasm</location>
    </subcellularLocation>
</comment>
<comment type="similarity">
    <text evidence="1">Belongs to the FAD-dependent oxidoreductase family.</text>
</comment>
<gene>
    <name evidence="1" type="primary">norW</name>
    <name evidence="1" type="synonym">flrR</name>
    <name type="ordered locus">SPAB_03533</name>
</gene>
<accession>A9N0E0</accession>
<name>NORW_SALPB</name>
<sequence>MSRGIIIIGSGFAARQLVKNIRKQDAHVPLTLIAADSMDEYNKPDLSHVISQSQRADDLTRQLAGEFAEQFNLRLFPHTWVADIDADAHVVKSQDKQWQYDKLVLATGATAFVPPITGRELMLTLNSQQEYRACETQLRDAQRVLIIGGGLIGSELAMDFCRAGKTVTLMDNAASLLASLMPPEVSSRLQHHLTDMGVHLLLKSQLQKLEKTEAGIRATLVSQHSIEVDAVIAATGLRPETALARRAGVAVNRGVCVDSYLQTSHPDIYAIGDCAEINGQVLPFLQPIQLSAMYLAKNLLGGNAPLKLPAMLVKVKTPELPLHLAGETQRRDLSWHITAESDGMIAKGMSGEGQLRAFVVSEDRMKEAFALLKTLSV</sequence>